<keyword id="KW-0997">Cell inner membrane</keyword>
<keyword id="KW-1003">Cell membrane</keyword>
<keyword id="KW-0406">Ion transport</keyword>
<keyword id="KW-0472">Membrane</keyword>
<keyword id="KW-0520">NAD</keyword>
<keyword id="KW-0915">Sodium</keyword>
<keyword id="KW-0739">Sodium transport</keyword>
<keyword id="KW-1278">Translocase</keyword>
<keyword id="KW-0812">Transmembrane</keyword>
<keyword id="KW-1133">Transmembrane helix</keyword>
<keyword id="KW-0813">Transport</keyword>
<keyword id="KW-0830">Ubiquinone</keyword>
<proteinExistence type="inferred from homology"/>
<dbReference type="EC" id="7.2.1.1" evidence="1"/>
<dbReference type="EMBL" id="AF165980">
    <property type="protein sequence ID" value="AAF15415.1"/>
    <property type="molecule type" value="Genomic_DNA"/>
</dbReference>
<dbReference type="EMBL" id="CP000789">
    <property type="protein sequence ID" value="ABU72219.1"/>
    <property type="molecule type" value="Genomic_DNA"/>
</dbReference>
<dbReference type="RefSeq" id="WP_005427385.1">
    <property type="nucleotide sequence ID" value="NC_022269.1"/>
</dbReference>
<dbReference type="SMR" id="Q9RFV7"/>
<dbReference type="GeneID" id="67376493"/>
<dbReference type="KEGG" id="vha:VIBHAR_03271"/>
<dbReference type="PATRIC" id="fig|338187.25.peg.2921"/>
<dbReference type="Proteomes" id="UP000008152">
    <property type="component" value="Chromosome I"/>
</dbReference>
<dbReference type="GO" id="GO:0009276">
    <property type="term" value="C:Gram-negative-bacterium-type cell wall"/>
    <property type="evidence" value="ECO:0007669"/>
    <property type="project" value="InterPro"/>
</dbReference>
<dbReference type="GO" id="GO:0005886">
    <property type="term" value="C:plasma membrane"/>
    <property type="evidence" value="ECO:0007669"/>
    <property type="project" value="UniProtKB-SubCell"/>
</dbReference>
<dbReference type="GO" id="GO:0016655">
    <property type="term" value="F:oxidoreductase activity, acting on NAD(P)H, quinone or similar compound as acceptor"/>
    <property type="evidence" value="ECO:0007669"/>
    <property type="project" value="UniProtKB-UniRule"/>
</dbReference>
<dbReference type="GO" id="GO:0022904">
    <property type="term" value="P:respiratory electron transport chain"/>
    <property type="evidence" value="ECO:0007669"/>
    <property type="project" value="InterPro"/>
</dbReference>
<dbReference type="GO" id="GO:0006814">
    <property type="term" value="P:sodium ion transport"/>
    <property type="evidence" value="ECO:0007669"/>
    <property type="project" value="UniProtKB-UniRule"/>
</dbReference>
<dbReference type="HAMAP" id="MF_00429">
    <property type="entry name" value="NqrE"/>
    <property type="match status" value="1"/>
</dbReference>
<dbReference type="InterPro" id="IPR003667">
    <property type="entry name" value="NqrDE/RnfAE"/>
</dbReference>
<dbReference type="InterPro" id="IPR050133">
    <property type="entry name" value="NqrDE/RnfAE_oxidrdctase"/>
</dbReference>
<dbReference type="InterPro" id="IPR010967">
    <property type="entry name" value="NqrE"/>
</dbReference>
<dbReference type="NCBIfam" id="TIGR01940">
    <property type="entry name" value="nqrE"/>
    <property type="match status" value="1"/>
</dbReference>
<dbReference type="PANTHER" id="PTHR30335">
    <property type="entry name" value="INTEGRAL MEMBRANE PROTEIN OF SOXR-REDUCING COMPLEX"/>
    <property type="match status" value="1"/>
</dbReference>
<dbReference type="PANTHER" id="PTHR30335:SF1">
    <property type="entry name" value="NA(+)-TRANSLOCATING NADH-QUINONE REDUCTASE SUBUNIT E"/>
    <property type="match status" value="1"/>
</dbReference>
<dbReference type="Pfam" id="PF02508">
    <property type="entry name" value="Rnf-Nqr"/>
    <property type="match status" value="1"/>
</dbReference>
<dbReference type="PIRSF" id="PIRSF006102">
    <property type="entry name" value="NQR_DE"/>
    <property type="match status" value="1"/>
</dbReference>
<reference key="1">
    <citation type="journal article" date="1999" name="Biochemistry">
        <title>Sequencing and preliminary characterization of the Na+-translocating NADH:ubiquinone oxidoreductase from Vibrio harveyi.</title>
        <authorList>
            <person name="Zhou W."/>
            <person name="Bertsova Y.V."/>
            <person name="Feng B."/>
            <person name="Tsatsos P."/>
            <person name="Verkhovskaya M.L."/>
            <person name="Gennis R.B."/>
            <person name="Bogachev A.V."/>
            <person name="Barquera B."/>
        </authorList>
    </citation>
    <scope>NUCLEOTIDE SEQUENCE [GENOMIC DNA]</scope>
</reference>
<reference key="2">
    <citation type="submission" date="2007-08" db="EMBL/GenBank/DDBJ databases">
        <authorList>
            <consortium name="The Vibrio harveyi Genome Sequencing Project"/>
            <person name="Bassler B."/>
            <person name="Clifton S.W."/>
            <person name="Fulton L."/>
            <person name="Delehaunty K."/>
            <person name="Fronick C."/>
            <person name="Harrison M."/>
            <person name="Markivic C."/>
            <person name="Fulton R."/>
            <person name="Tin-Wollam A.-M."/>
            <person name="Shah N."/>
            <person name="Pepin K."/>
            <person name="Nash W."/>
            <person name="Thiruvilangam P."/>
            <person name="Bhonagiri V."/>
            <person name="Waters C."/>
            <person name="Tu K.C."/>
            <person name="Irgon J."/>
            <person name="Wilson R.K."/>
        </authorList>
    </citation>
    <scope>NUCLEOTIDE SEQUENCE [LARGE SCALE GENOMIC DNA]</scope>
    <source>
        <strain>ATCC BAA-1116 / BB120</strain>
    </source>
</reference>
<name>NQRE_VIBC1</name>
<feature type="chain" id="PRO_0000214260" description="Na(+)-translocating NADH-quinone reductase subunit E">
    <location>
        <begin position="1"/>
        <end position="198"/>
    </location>
</feature>
<feature type="transmembrane region" description="Helical" evidence="1">
    <location>
        <begin position="11"/>
        <end position="31"/>
    </location>
</feature>
<feature type="transmembrane region" description="Helical" evidence="1">
    <location>
        <begin position="39"/>
        <end position="59"/>
    </location>
</feature>
<feature type="transmembrane region" description="Helical" evidence="1">
    <location>
        <begin position="77"/>
        <end position="97"/>
    </location>
</feature>
<feature type="transmembrane region" description="Helical" evidence="1">
    <location>
        <begin position="110"/>
        <end position="130"/>
    </location>
</feature>
<feature type="transmembrane region" description="Helical" evidence="1">
    <location>
        <begin position="140"/>
        <end position="160"/>
    </location>
</feature>
<feature type="transmembrane region" description="Helical" evidence="1">
    <location>
        <begin position="176"/>
        <end position="196"/>
    </location>
</feature>
<evidence type="ECO:0000255" key="1">
    <source>
        <dbReference type="HAMAP-Rule" id="MF_00429"/>
    </source>
</evidence>
<gene>
    <name evidence="1" type="primary">nqrE</name>
    <name type="ordered locus">VIBHAR_03271</name>
</gene>
<comment type="function">
    <text evidence="1">NQR complex catalyzes the reduction of ubiquinone-1 to ubiquinol by two successive reactions, coupled with the transport of Na(+) ions from the cytoplasm to the periplasm. NqrA to NqrE are probably involved in the second step, the conversion of ubisemiquinone to ubiquinol.</text>
</comment>
<comment type="catalytic activity">
    <reaction evidence="1">
        <text>a ubiquinone + n Na(+)(in) + NADH + H(+) = a ubiquinol + n Na(+)(out) + NAD(+)</text>
        <dbReference type="Rhea" id="RHEA:47748"/>
        <dbReference type="Rhea" id="RHEA-COMP:9565"/>
        <dbReference type="Rhea" id="RHEA-COMP:9566"/>
        <dbReference type="ChEBI" id="CHEBI:15378"/>
        <dbReference type="ChEBI" id="CHEBI:16389"/>
        <dbReference type="ChEBI" id="CHEBI:17976"/>
        <dbReference type="ChEBI" id="CHEBI:29101"/>
        <dbReference type="ChEBI" id="CHEBI:57540"/>
        <dbReference type="ChEBI" id="CHEBI:57945"/>
        <dbReference type="EC" id="7.2.1.1"/>
    </reaction>
</comment>
<comment type="subunit">
    <text evidence="1">Composed of six subunits; NqrA, NqrB, NqrC, NqrD, NqrE and NqrF.</text>
</comment>
<comment type="subcellular location">
    <subcellularLocation>
        <location evidence="1">Cell inner membrane</location>
        <topology evidence="1">Multi-pass membrane protein</topology>
    </subcellularLocation>
</comment>
<comment type="similarity">
    <text evidence="1">Belongs to the NqrDE/RnfAE family.</text>
</comment>
<organism>
    <name type="scientific">Vibrio campbellii (strain ATCC BAA-1116)</name>
    <dbReference type="NCBI Taxonomy" id="2902295"/>
    <lineage>
        <taxon>Bacteria</taxon>
        <taxon>Pseudomonadati</taxon>
        <taxon>Pseudomonadota</taxon>
        <taxon>Gammaproteobacteria</taxon>
        <taxon>Vibrionales</taxon>
        <taxon>Vibrionaceae</taxon>
        <taxon>Vibrio</taxon>
    </lineage>
</organism>
<protein>
    <recommendedName>
        <fullName evidence="1">Na(+)-translocating NADH-quinone reductase subunit E</fullName>
        <shortName evidence="1">Na(+)-NQR subunit E</shortName>
        <shortName evidence="1">Na(+)-translocating NQR subunit E</shortName>
        <ecNumber evidence="1">7.2.1.1</ecNumber>
    </recommendedName>
    <alternativeName>
        <fullName evidence="1">NQR complex subunit E</fullName>
    </alternativeName>
    <alternativeName>
        <fullName evidence="1">NQR-1 subunit E</fullName>
    </alternativeName>
</protein>
<sequence>MEHYISLLVKSIFIENMALSFFLGMCTFLAVSKKVKTSFGLGVAVVVVLTIAVPVNNLVYNLVLKENALVEGVDLSFLNFITFIGVIAALVQILEMVLDRFFPPLYNALGIFLPLITVNCAIFGGVSFMVQRDYNFAESIVYGFGSGVGWMLAIVALAGIREKMKYSDVPPGLRGLGITFITVGLMALGFMSFSGVQL</sequence>
<accession>Q9RFV7</accession>
<accession>A7N1U2</accession>